<reference key="1">
    <citation type="journal article" date="2009" name="BMC Genomics">
        <title>Metabolic analysis of the soil microbe Dechloromonas aromatica str. RCB: indications of a surprisingly complex life-style and cryptic anaerobic pathways for aromatic degradation.</title>
        <authorList>
            <person name="Salinero K.K."/>
            <person name="Keller K."/>
            <person name="Feil W.S."/>
            <person name="Feil H."/>
            <person name="Trong S."/>
            <person name="Di Bartolo G."/>
            <person name="Lapidus A."/>
        </authorList>
    </citation>
    <scope>NUCLEOTIDE SEQUENCE [LARGE SCALE GENOMIC DNA]</scope>
    <source>
        <strain>RCB</strain>
    </source>
</reference>
<keyword id="KW-0067">ATP-binding</keyword>
<keyword id="KW-0414">Isoprene biosynthesis</keyword>
<keyword id="KW-0418">Kinase</keyword>
<keyword id="KW-0547">Nucleotide-binding</keyword>
<keyword id="KW-0808">Transferase</keyword>
<sequence length="274" mass="29429">MWPAPAKLNLFLHVIGRRADGYHLLQTVFRFIDRADTLRFEPRSDGEIVLATPIPGVPTDSDLTVRAARLLQQASACRQGATIHLDKQLPMGGGLGGGSSDAATVLLALNHLWQTGLTRPQLEKLGLTLGADVPVFVHGHNTFAEGIGEAFTDIELPPQSYLVLHPAIHVPTAAIFGAPELKRDTPPIRHGEWQPGQGHNDLEAVACAKFPAVAEYLNWLKQHAPQAMMTGSGACVFAGFASRREAEAILAQCPADMNAWIADGLGEHPLAKIS</sequence>
<proteinExistence type="inferred from homology"/>
<evidence type="ECO:0000255" key="1">
    <source>
        <dbReference type="HAMAP-Rule" id="MF_00061"/>
    </source>
</evidence>
<protein>
    <recommendedName>
        <fullName evidence="1">4-diphosphocytidyl-2-C-methyl-D-erythritol kinase</fullName>
        <shortName evidence="1">CMK</shortName>
        <ecNumber evidence="1">2.7.1.148</ecNumber>
    </recommendedName>
    <alternativeName>
        <fullName evidence="1">4-(cytidine-5'-diphospho)-2-C-methyl-D-erythritol kinase</fullName>
    </alternativeName>
</protein>
<feature type="chain" id="PRO_0000235084" description="4-diphosphocytidyl-2-C-methyl-D-erythritol kinase">
    <location>
        <begin position="1"/>
        <end position="274"/>
    </location>
</feature>
<feature type="active site" evidence="1">
    <location>
        <position position="7"/>
    </location>
</feature>
<feature type="active site" evidence="1">
    <location>
        <position position="132"/>
    </location>
</feature>
<feature type="binding site" evidence="1">
    <location>
        <begin position="90"/>
        <end position="100"/>
    </location>
    <ligand>
        <name>ATP</name>
        <dbReference type="ChEBI" id="CHEBI:30616"/>
    </ligand>
</feature>
<dbReference type="EC" id="2.7.1.148" evidence="1"/>
<dbReference type="EMBL" id="CP000089">
    <property type="protein sequence ID" value="AAZ48458.1"/>
    <property type="molecule type" value="Genomic_DNA"/>
</dbReference>
<dbReference type="SMR" id="Q479M3"/>
<dbReference type="STRING" id="159087.Daro_3729"/>
<dbReference type="KEGG" id="dar:Daro_3729"/>
<dbReference type="eggNOG" id="COG1947">
    <property type="taxonomic scope" value="Bacteria"/>
</dbReference>
<dbReference type="HOGENOM" id="CLU_053057_3_0_4"/>
<dbReference type="OrthoDB" id="9809438at2"/>
<dbReference type="UniPathway" id="UPA00056">
    <property type="reaction ID" value="UER00094"/>
</dbReference>
<dbReference type="GO" id="GO:0050515">
    <property type="term" value="F:4-(cytidine 5'-diphospho)-2-C-methyl-D-erythritol kinase activity"/>
    <property type="evidence" value="ECO:0007669"/>
    <property type="project" value="UniProtKB-UniRule"/>
</dbReference>
<dbReference type="GO" id="GO:0005524">
    <property type="term" value="F:ATP binding"/>
    <property type="evidence" value="ECO:0007669"/>
    <property type="project" value="UniProtKB-UniRule"/>
</dbReference>
<dbReference type="GO" id="GO:0019288">
    <property type="term" value="P:isopentenyl diphosphate biosynthetic process, methylerythritol 4-phosphate pathway"/>
    <property type="evidence" value="ECO:0007669"/>
    <property type="project" value="UniProtKB-UniRule"/>
</dbReference>
<dbReference type="GO" id="GO:0016114">
    <property type="term" value="P:terpenoid biosynthetic process"/>
    <property type="evidence" value="ECO:0007669"/>
    <property type="project" value="InterPro"/>
</dbReference>
<dbReference type="Gene3D" id="3.30.230.10">
    <property type="match status" value="1"/>
</dbReference>
<dbReference type="Gene3D" id="3.30.70.890">
    <property type="entry name" value="GHMP kinase, C-terminal domain"/>
    <property type="match status" value="1"/>
</dbReference>
<dbReference type="HAMAP" id="MF_00061">
    <property type="entry name" value="IspE"/>
    <property type="match status" value="1"/>
</dbReference>
<dbReference type="InterPro" id="IPR013750">
    <property type="entry name" value="GHMP_kinase_C_dom"/>
</dbReference>
<dbReference type="InterPro" id="IPR036554">
    <property type="entry name" value="GHMP_kinase_C_sf"/>
</dbReference>
<dbReference type="InterPro" id="IPR006204">
    <property type="entry name" value="GHMP_kinase_N_dom"/>
</dbReference>
<dbReference type="InterPro" id="IPR004424">
    <property type="entry name" value="IspE"/>
</dbReference>
<dbReference type="InterPro" id="IPR020568">
    <property type="entry name" value="Ribosomal_Su5_D2-typ_SF"/>
</dbReference>
<dbReference type="InterPro" id="IPR014721">
    <property type="entry name" value="Ribsml_uS5_D2-typ_fold_subgr"/>
</dbReference>
<dbReference type="NCBIfam" id="TIGR00154">
    <property type="entry name" value="ispE"/>
    <property type="match status" value="1"/>
</dbReference>
<dbReference type="PANTHER" id="PTHR43527">
    <property type="entry name" value="4-DIPHOSPHOCYTIDYL-2-C-METHYL-D-ERYTHRITOL KINASE, CHLOROPLASTIC"/>
    <property type="match status" value="1"/>
</dbReference>
<dbReference type="PANTHER" id="PTHR43527:SF2">
    <property type="entry name" value="4-DIPHOSPHOCYTIDYL-2-C-METHYL-D-ERYTHRITOL KINASE, CHLOROPLASTIC"/>
    <property type="match status" value="1"/>
</dbReference>
<dbReference type="Pfam" id="PF08544">
    <property type="entry name" value="GHMP_kinases_C"/>
    <property type="match status" value="1"/>
</dbReference>
<dbReference type="Pfam" id="PF00288">
    <property type="entry name" value="GHMP_kinases_N"/>
    <property type="match status" value="1"/>
</dbReference>
<dbReference type="PIRSF" id="PIRSF010376">
    <property type="entry name" value="IspE"/>
    <property type="match status" value="1"/>
</dbReference>
<dbReference type="SUPFAM" id="SSF55060">
    <property type="entry name" value="GHMP Kinase, C-terminal domain"/>
    <property type="match status" value="1"/>
</dbReference>
<dbReference type="SUPFAM" id="SSF54211">
    <property type="entry name" value="Ribosomal protein S5 domain 2-like"/>
    <property type="match status" value="1"/>
</dbReference>
<gene>
    <name evidence="1" type="primary">ispE</name>
    <name type="ordered locus">Daro_3729</name>
</gene>
<organism>
    <name type="scientific">Dechloromonas aromatica (strain RCB)</name>
    <dbReference type="NCBI Taxonomy" id="159087"/>
    <lineage>
        <taxon>Bacteria</taxon>
        <taxon>Pseudomonadati</taxon>
        <taxon>Pseudomonadota</taxon>
        <taxon>Betaproteobacteria</taxon>
        <taxon>Rhodocyclales</taxon>
        <taxon>Azonexaceae</taxon>
        <taxon>Dechloromonas</taxon>
    </lineage>
</organism>
<comment type="function">
    <text evidence="1">Catalyzes the phosphorylation of the position 2 hydroxy group of 4-diphosphocytidyl-2C-methyl-D-erythritol.</text>
</comment>
<comment type="catalytic activity">
    <reaction evidence="1">
        <text>4-CDP-2-C-methyl-D-erythritol + ATP = 4-CDP-2-C-methyl-D-erythritol 2-phosphate + ADP + H(+)</text>
        <dbReference type="Rhea" id="RHEA:18437"/>
        <dbReference type="ChEBI" id="CHEBI:15378"/>
        <dbReference type="ChEBI" id="CHEBI:30616"/>
        <dbReference type="ChEBI" id="CHEBI:57823"/>
        <dbReference type="ChEBI" id="CHEBI:57919"/>
        <dbReference type="ChEBI" id="CHEBI:456216"/>
        <dbReference type="EC" id="2.7.1.148"/>
    </reaction>
</comment>
<comment type="pathway">
    <text evidence="1">Isoprenoid biosynthesis; isopentenyl diphosphate biosynthesis via DXP pathway; isopentenyl diphosphate from 1-deoxy-D-xylulose 5-phosphate: step 3/6.</text>
</comment>
<comment type="similarity">
    <text evidence="1">Belongs to the GHMP kinase family. IspE subfamily.</text>
</comment>
<name>ISPE_DECAR</name>
<accession>Q479M3</accession>